<gene>
    <name type="ORF">PF14_0322</name>
    <name type="ORF">PF3D7_1434100</name>
</gene>
<proteinExistence type="inferred from homology"/>
<sequence>MKVVSCNYRVKNVKDIETPTYTILTNNITPEYINLELLRKIDKKFIINCSLLEIYNNLDVFEKVKEYFSSNKTNEVSGHYLHEFCDFQDSYRYLNIRNVLVDDYNINVHKFISLKYDNSTAVFSIDDYIKCLKIFEPDIFCIPCEEIKINEQVGKKKKNRIINLMNEFLEKVQIIKNTNLSNSLCILSIPCTVDIDTVITETINKYDSIIDGILLSGLGYDESNETRTNAFKNILNILPNNKLKFIQLSNGNPIEILHAIYHGIDVIEPNFPYYLAKNGKAINMNLKMDNLQDGNEYNLQDKNNDNIYDINLLDFKNDVNFIIDLNNPKYVLDHSTITCNSPRKESKSYIHHLLKCHELTAHVILTYHNLYIYRSFFQEIQLHIKENNFLSYINWFIEKNELNKKEE</sequence>
<comment type="similarity">
    <text evidence="1">Belongs to the queuine tRNA-ribosyltransferase family.</text>
</comment>
<feature type="chain" id="PRO_0000295636" description="Queuine tRNA-ribosyltransferase-like protein">
    <location>
        <begin position="1"/>
        <end position="407"/>
    </location>
</feature>
<reference key="1">
    <citation type="journal article" date="2002" name="Nature">
        <title>Genome sequence of the human malaria parasite Plasmodium falciparum.</title>
        <authorList>
            <person name="Gardner M.J."/>
            <person name="Hall N."/>
            <person name="Fung E."/>
            <person name="White O."/>
            <person name="Berriman M."/>
            <person name="Hyman R.W."/>
            <person name="Carlton J.M."/>
            <person name="Pain A."/>
            <person name="Nelson K.E."/>
            <person name="Bowman S."/>
            <person name="Paulsen I.T."/>
            <person name="James K.D."/>
            <person name="Eisen J.A."/>
            <person name="Rutherford K.M."/>
            <person name="Salzberg S.L."/>
            <person name="Craig A."/>
            <person name="Kyes S."/>
            <person name="Chan M.-S."/>
            <person name="Nene V."/>
            <person name="Shallom S.J."/>
            <person name="Suh B."/>
            <person name="Peterson J."/>
            <person name="Angiuoli S."/>
            <person name="Pertea M."/>
            <person name="Allen J."/>
            <person name="Selengut J."/>
            <person name="Haft D."/>
            <person name="Mather M.W."/>
            <person name="Vaidya A.B."/>
            <person name="Martin D.M.A."/>
            <person name="Fairlamb A.H."/>
            <person name="Fraunholz M.J."/>
            <person name="Roos D.S."/>
            <person name="Ralph S.A."/>
            <person name="McFadden G.I."/>
            <person name="Cummings L.M."/>
            <person name="Subramanian G.M."/>
            <person name="Mungall C."/>
            <person name="Venter J.C."/>
            <person name="Carucci D.J."/>
            <person name="Hoffman S.L."/>
            <person name="Newbold C."/>
            <person name="Davis R.W."/>
            <person name="Fraser C.M."/>
            <person name="Barrell B.G."/>
        </authorList>
    </citation>
    <scope>NUCLEOTIDE SEQUENCE [LARGE SCALE GENOMIC DNA]</scope>
    <source>
        <strain>3D7</strain>
    </source>
</reference>
<evidence type="ECO:0000305" key="1"/>
<organism>
    <name type="scientific">Plasmodium falciparum (isolate 3D7)</name>
    <dbReference type="NCBI Taxonomy" id="36329"/>
    <lineage>
        <taxon>Eukaryota</taxon>
        <taxon>Sar</taxon>
        <taxon>Alveolata</taxon>
        <taxon>Apicomplexa</taxon>
        <taxon>Aconoidasida</taxon>
        <taxon>Haemosporida</taxon>
        <taxon>Plasmodiidae</taxon>
        <taxon>Plasmodium</taxon>
        <taxon>Plasmodium (Laverania)</taxon>
    </lineage>
</organism>
<name>TGTL_PLAF7</name>
<dbReference type="EMBL" id="LN999946">
    <property type="protein sequence ID" value="CZU00038.1"/>
    <property type="molecule type" value="Genomic_DNA"/>
</dbReference>
<dbReference type="RefSeq" id="XP_001348496.1">
    <property type="nucleotide sequence ID" value="XM_001348460.1"/>
</dbReference>
<dbReference type="SMR" id="Q8ILC2"/>
<dbReference type="FunCoup" id="Q8ILC2">
    <property type="interactions" value="143"/>
</dbReference>
<dbReference type="STRING" id="36329.Q8ILC2"/>
<dbReference type="PaxDb" id="5833-PF14_0322"/>
<dbReference type="EnsemblProtists" id="CZU00038">
    <property type="protein sequence ID" value="CZU00038"/>
    <property type="gene ID" value="PF3D7_1434100"/>
</dbReference>
<dbReference type="GeneID" id="811904"/>
<dbReference type="KEGG" id="pfa:PF3D7_1434100"/>
<dbReference type="VEuPathDB" id="PlasmoDB:PF3D7_1434100"/>
<dbReference type="HOGENOM" id="CLU_677039_0_0_1"/>
<dbReference type="InParanoid" id="Q8ILC2"/>
<dbReference type="OMA" id="MAGSRMK"/>
<dbReference type="OrthoDB" id="27601at2759"/>
<dbReference type="PhylomeDB" id="Q8ILC2"/>
<dbReference type="Proteomes" id="UP000001450">
    <property type="component" value="Chromosome 14"/>
</dbReference>
<dbReference type="GO" id="GO:0101030">
    <property type="term" value="P:tRNA-guanine transglycosylation"/>
    <property type="evidence" value="ECO:0000318"/>
    <property type="project" value="GO_Central"/>
</dbReference>
<dbReference type="FunFam" id="3.20.20.105:FF:000006">
    <property type="entry name" value="Queuine tRNA-ribosyltransferase-like protein"/>
    <property type="match status" value="1"/>
</dbReference>
<dbReference type="Gene3D" id="3.20.20.105">
    <property type="entry name" value="Queuine tRNA-ribosyltransferase-like"/>
    <property type="match status" value="1"/>
</dbReference>
<dbReference type="InterPro" id="IPR050852">
    <property type="entry name" value="Queuine_tRNA-ribosyltrfase"/>
</dbReference>
<dbReference type="InterPro" id="IPR036511">
    <property type="entry name" value="TGT-like_sf"/>
</dbReference>
<dbReference type="InterPro" id="IPR002616">
    <property type="entry name" value="tRNA_ribo_trans-like"/>
</dbReference>
<dbReference type="NCBIfam" id="TIGR00449">
    <property type="entry name" value="tgt_general"/>
    <property type="match status" value="1"/>
</dbReference>
<dbReference type="PANTHER" id="PTHR46064">
    <property type="entry name" value="QUEUINE TRNA-RIBOSYLTRANSFERASE ACCESSORY SUBUNIT 2"/>
    <property type="match status" value="1"/>
</dbReference>
<dbReference type="PANTHER" id="PTHR46064:SF1">
    <property type="entry name" value="QUEUINE TRNA-RIBOSYLTRANSFERASE ACCESSORY SUBUNIT 2"/>
    <property type="match status" value="1"/>
</dbReference>
<dbReference type="Pfam" id="PF01702">
    <property type="entry name" value="TGT"/>
    <property type="match status" value="1"/>
</dbReference>
<dbReference type="SUPFAM" id="SSF51713">
    <property type="entry name" value="tRNA-guanine transglycosylase"/>
    <property type="match status" value="1"/>
</dbReference>
<keyword id="KW-1185">Reference proteome</keyword>
<protein>
    <recommendedName>
        <fullName>Queuine tRNA-ribosyltransferase-like protein</fullName>
    </recommendedName>
</protein>
<accession>Q8ILC2</accession>
<accession>A0A144A3R0</accession>